<evidence type="ECO:0000255" key="1">
    <source>
        <dbReference type="HAMAP-Rule" id="MF_00203"/>
    </source>
</evidence>
<evidence type="ECO:0000256" key="2">
    <source>
        <dbReference type="SAM" id="MobiDB-lite"/>
    </source>
</evidence>
<comment type="function">
    <text evidence="1">The UvrABC repair system catalyzes the recognition and processing of DNA lesions. UvrC both incises the 5' and 3' sides of the lesion. The N-terminal half is responsible for the 3' incision and the C-terminal half is responsible for the 5' incision.</text>
</comment>
<comment type="subunit">
    <text evidence="1">Interacts with UvrB in an incision complex.</text>
</comment>
<comment type="subcellular location">
    <subcellularLocation>
        <location evidence="1">Cytoplasm</location>
    </subcellularLocation>
</comment>
<comment type="similarity">
    <text evidence="1">Belongs to the UvrC family.</text>
</comment>
<keyword id="KW-0963">Cytoplasm</keyword>
<keyword id="KW-0227">DNA damage</keyword>
<keyword id="KW-0228">DNA excision</keyword>
<keyword id="KW-0234">DNA repair</keyword>
<keyword id="KW-0267">Excision nuclease</keyword>
<keyword id="KW-1185">Reference proteome</keyword>
<keyword id="KW-0742">SOS response</keyword>
<protein>
    <recommendedName>
        <fullName evidence="1">UvrABC system protein C</fullName>
        <shortName evidence="1">Protein UvrC</shortName>
    </recommendedName>
    <alternativeName>
        <fullName evidence="1">Excinuclease ABC subunit C</fullName>
    </alternativeName>
</protein>
<dbReference type="EMBL" id="AE007317">
    <property type="protein sequence ID" value="AAK99347.1"/>
    <property type="molecule type" value="Genomic_DNA"/>
</dbReference>
<dbReference type="PIR" id="G97939">
    <property type="entry name" value="G97939"/>
</dbReference>
<dbReference type="RefSeq" id="NP_358137.1">
    <property type="nucleotide sequence ID" value="NC_003098.1"/>
</dbReference>
<dbReference type="RefSeq" id="WP_001061169.1">
    <property type="nucleotide sequence ID" value="NC_003098.1"/>
</dbReference>
<dbReference type="SMR" id="Q8DQQ9"/>
<dbReference type="STRING" id="171101.spr0543"/>
<dbReference type="KEGG" id="spr:spr0543"/>
<dbReference type="PATRIC" id="fig|171101.6.peg.597"/>
<dbReference type="eggNOG" id="COG0322">
    <property type="taxonomic scope" value="Bacteria"/>
</dbReference>
<dbReference type="HOGENOM" id="CLU_014841_3_2_9"/>
<dbReference type="Proteomes" id="UP000000586">
    <property type="component" value="Chromosome"/>
</dbReference>
<dbReference type="GO" id="GO:0005737">
    <property type="term" value="C:cytoplasm"/>
    <property type="evidence" value="ECO:0007669"/>
    <property type="project" value="UniProtKB-SubCell"/>
</dbReference>
<dbReference type="GO" id="GO:0009380">
    <property type="term" value="C:excinuclease repair complex"/>
    <property type="evidence" value="ECO:0000318"/>
    <property type="project" value="GO_Central"/>
</dbReference>
<dbReference type="GO" id="GO:0003677">
    <property type="term" value="F:DNA binding"/>
    <property type="evidence" value="ECO:0007669"/>
    <property type="project" value="UniProtKB-UniRule"/>
</dbReference>
<dbReference type="GO" id="GO:0009381">
    <property type="term" value="F:excinuclease ABC activity"/>
    <property type="evidence" value="ECO:0007669"/>
    <property type="project" value="UniProtKB-UniRule"/>
</dbReference>
<dbReference type="GO" id="GO:0006974">
    <property type="term" value="P:DNA damage response"/>
    <property type="evidence" value="ECO:0000318"/>
    <property type="project" value="GO_Central"/>
</dbReference>
<dbReference type="GO" id="GO:0006289">
    <property type="term" value="P:nucleotide-excision repair"/>
    <property type="evidence" value="ECO:0007669"/>
    <property type="project" value="UniProtKB-UniRule"/>
</dbReference>
<dbReference type="GO" id="GO:0009432">
    <property type="term" value="P:SOS response"/>
    <property type="evidence" value="ECO:0007669"/>
    <property type="project" value="UniProtKB-UniRule"/>
</dbReference>
<dbReference type="CDD" id="cd10434">
    <property type="entry name" value="GIY-YIG_UvrC_Cho"/>
    <property type="match status" value="1"/>
</dbReference>
<dbReference type="FunFam" id="3.30.420.340:FF:000002">
    <property type="entry name" value="UvrABC system protein C"/>
    <property type="match status" value="1"/>
</dbReference>
<dbReference type="FunFam" id="3.40.1440.10:FF:000001">
    <property type="entry name" value="UvrABC system protein C"/>
    <property type="match status" value="1"/>
</dbReference>
<dbReference type="FunFam" id="4.10.860.10:FF:000007">
    <property type="entry name" value="UvrABC system protein C"/>
    <property type="match status" value="1"/>
</dbReference>
<dbReference type="Gene3D" id="1.10.150.20">
    <property type="entry name" value="5' to 3' exonuclease, C-terminal subdomain"/>
    <property type="match status" value="1"/>
</dbReference>
<dbReference type="Gene3D" id="3.40.1440.10">
    <property type="entry name" value="GIY-YIG endonuclease"/>
    <property type="match status" value="1"/>
</dbReference>
<dbReference type="Gene3D" id="4.10.860.10">
    <property type="entry name" value="UVR domain"/>
    <property type="match status" value="1"/>
</dbReference>
<dbReference type="Gene3D" id="3.30.420.340">
    <property type="entry name" value="UvrC, RNAse H endonuclease domain"/>
    <property type="match status" value="1"/>
</dbReference>
<dbReference type="HAMAP" id="MF_00203">
    <property type="entry name" value="UvrC"/>
    <property type="match status" value="1"/>
</dbReference>
<dbReference type="InterPro" id="IPR000305">
    <property type="entry name" value="GIY-YIG_endonuc"/>
</dbReference>
<dbReference type="InterPro" id="IPR035901">
    <property type="entry name" value="GIY-YIG_endonuc_sf"/>
</dbReference>
<dbReference type="InterPro" id="IPR047296">
    <property type="entry name" value="GIY-YIG_UvrC_Cho"/>
</dbReference>
<dbReference type="InterPro" id="IPR010994">
    <property type="entry name" value="RuvA_2-like"/>
</dbReference>
<dbReference type="InterPro" id="IPR001943">
    <property type="entry name" value="UVR_dom"/>
</dbReference>
<dbReference type="InterPro" id="IPR036876">
    <property type="entry name" value="UVR_dom_sf"/>
</dbReference>
<dbReference type="InterPro" id="IPR050066">
    <property type="entry name" value="UvrABC_protein_C"/>
</dbReference>
<dbReference type="InterPro" id="IPR004791">
    <property type="entry name" value="UvrC"/>
</dbReference>
<dbReference type="InterPro" id="IPR001162">
    <property type="entry name" value="UvrC_RNase_H_dom"/>
</dbReference>
<dbReference type="InterPro" id="IPR038476">
    <property type="entry name" value="UvrC_RNase_H_dom_sf"/>
</dbReference>
<dbReference type="NCBIfam" id="TIGR00194">
    <property type="entry name" value="uvrC"/>
    <property type="match status" value="1"/>
</dbReference>
<dbReference type="PANTHER" id="PTHR30562:SF1">
    <property type="entry name" value="UVRABC SYSTEM PROTEIN C"/>
    <property type="match status" value="1"/>
</dbReference>
<dbReference type="PANTHER" id="PTHR30562">
    <property type="entry name" value="UVRC/OXIDOREDUCTASE"/>
    <property type="match status" value="1"/>
</dbReference>
<dbReference type="Pfam" id="PF01541">
    <property type="entry name" value="GIY-YIG"/>
    <property type="match status" value="1"/>
</dbReference>
<dbReference type="Pfam" id="PF02151">
    <property type="entry name" value="UVR"/>
    <property type="match status" value="1"/>
</dbReference>
<dbReference type="Pfam" id="PF22920">
    <property type="entry name" value="UvrC_RNaseH"/>
    <property type="match status" value="1"/>
</dbReference>
<dbReference type="Pfam" id="PF08459">
    <property type="entry name" value="UvrC_RNaseH_dom"/>
    <property type="match status" value="1"/>
</dbReference>
<dbReference type="SMART" id="SM00465">
    <property type="entry name" value="GIYc"/>
    <property type="match status" value="1"/>
</dbReference>
<dbReference type="SUPFAM" id="SSF46600">
    <property type="entry name" value="C-terminal UvrC-binding domain of UvrB"/>
    <property type="match status" value="1"/>
</dbReference>
<dbReference type="SUPFAM" id="SSF82771">
    <property type="entry name" value="GIY-YIG endonuclease"/>
    <property type="match status" value="1"/>
</dbReference>
<dbReference type="SUPFAM" id="SSF47781">
    <property type="entry name" value="RuvA domain 2-like"/>
    <property type="match status" value="1"/>
</dbReference>
<dbReference type="PROSITE" id="PS50164">
    <property type="entry name" value="GIY_YIG"/>
    <property type="match status" value="1"/>
</dbReference>
<dbReference type="PROSITE" id="PS50151">
    <property type="entry name" value="UVR"/>
    <property type="match status" value="1"/>
</dbReference>
<dbReference type="PROSITE" id="PS50165">
    <property type="entry name" value="UVRC"/>
    <property type="match status" value="1"/>
</dbReference>
<organism>
    <name type="scientific">Streptococcus pneumoniae (strain ATCC BAA-255 / R6)</name>
    <dbReference type="NCBI Taxonomy" id="171101"/>
    <lineage>
        <taxon>Bacteria</taxon>
        <taxon>Bacillati</taxon>
        <taxon>Bacillota</taxon>
        <taxon>Bacilli</taxon>
        <taxon>Lactobacillales</taxon>
        <taxon>Streptococcaceae</taxon>
        <taxon>Streptococcus</taxon>
    </lineage>
</organism>
<sequence>MNNLIKSKLELLPTSPGCYIHKDKNGTIIYVGKAKNLRNRVRSYFRGSHDTKTEALVSEIVDFEFIVTESNIEALLLEINLIKENKPKYNIMLKDDKSYPFIKITNERYPRLIITRQVKKDGSLYFGPYPDVGAANEIKRLLDRIFPFRKCTNPPSKVCFYYHIGQCMAHTICKKDEAYFKSMAQEVSDFLKGQDDKIIDDLKSKMAVAAQSMEFERAAEYRDLIQAIGTLRTKQRVMAKDLQNRDVFGYYVDKGWMCVQVFFVRQGKLIERDVNLFPYFNDPDEDFLTYVGQFYQEKSHLVPNEVLIPQDIDEEAVKALVDSKILKPQRGEKKQLVNLAIKNARVSLEQKFNLLEKSVEKTQGAIENLGRLLQIPTPVRIESFDNSNIMGTSPVSAMVVFVNGKPSKKDYRKYKIKTVVGPDDYASMREVIRRRYGRVQREALTPPDLIVIDGGQGQVNIAKQVIQEELGLDIPIAGLQKNDKHQTHELLFGDPLEVVDLSRNSQEFFLLQRIQDEVHRFAITFHRQLRSKNSFSSQLDGIDGLGPKRKQNLMRHFKSLTKIKEASVDEIVEVGVPRVVAEAVQRKLNPQGEALSQVAEERVDYQTEGNHNEP</sequence>
<accession>Q8DQQ9</accession>
<reference key="1">
    <citation type="journal article" date="2001" name="J. Bacteriol.">
        <title>Genome of the bacterium Streptococcus pneumoniae strain R6.</title>
        <authorList>
            <person name="Hoskins J."/>
            <person name="Alborn W.E. Jr."/>
            <person name="Arnold J."/>
            <person name="Blaszczak L.C."/>
            <person name="Burgett S."/>
            <person name="DeHoff B.S."/>
            <person name="Estrem S.T."/>
            <person name="Fritz L."/>
            <person name="Fu D.-J."/>
            <person name="Fuller W."/>
            <person name="Geringer C."/>
            <person name="Gilmour R."/>
            <person name="Glass J.S."/>
            <person name="Khoja H."/>
            <person name="Kraft A.R."/>
            <person name="Lagace R.E."/>
            <person name="LeBlanc D.J."/>
            <person name="Lee L.N."/>
            <person name="Lefkowitz E.J."/>
            <person name="Lu J."/>
            <person name="Matsushima P."/>
            <person name="McAhren S.M."/>
            <person name="McHenney M."/>
            <person name="McLeaster K."/>
            <person name="Mundy C.W."/>
            <person name="Nicas T.I."/>
            <person name="Norris F.H."/>
            <person name="O'Gara M."/>
            <person name="Peery R.B."/>
            <person name="Robertson G.T."/>
            <person name="Rockey P."/>
            <person name="Sun P.-M."/>
            <person name="Winkler M.E."/>
            <person name="Yang Y."/>
            <person name="Young-Bellido M."/>
            <person name="Zhao G."/>
            <person name="Zook C.A."/>
            <person name="Baltz R.H."/>
            <person name="Jaskunas S.R."/>
            <person name="Rosteck P.R. Jr."/>
            <person name="Skatrud P.L."/>
            <person name="Glass J.I."/>
        </authorList>
    </citation>
    <scope>NUCLEOTIDE SEQUENCE [LARGE SCALE GENOMIC DNA]</scope>
    <source>
        <strain>ATCC BAA-255 / R6</strain>
    </source>
</reference>
<feature type="chain" id="PRO_0000138347" description="UvrABC system protein C">
    <location>
        <begin position="1"/>
        <end position="614"/>
    </location>
</feature>
<feature type="domain" description="GIY-YIG" evidence="1">
    <location>
        <begin position="14"/>
        <end position="91"/>
    </location>
</feature>
<feature type="domain" description="UVR" evidence="1">
    <location>
        <begin position="196"/>
        <end position="231"/>
    </location>
</feature>
<feature type="region of interest" description="Disordered" evidence="2">
    <location>
        <begin position="595"/>
        <end position="614"/>
    </location>
</feature>
<feature type="compositionally biased region" description="Basic and acidic residues" evidence="2">
    <location>
        <begin position="599"/>
        <end position="614"/>
    </location>
</feature>
<gene>
    <name evidence="1" type="primary">uvrC</name>
    <name type="ordered locus">spr0543</name>
</gene>
<proteinExistence type="inferred from homology"/>
<name>UVRC_STRR6</name>